<keyword id="KW-0067">ATP-binding</keyword>
<keyword id="KW-0418">Kinase</keyword>
<keyword id="KW-0547">Nucleotide-binding</keyword>
<keyword id="KW-0808">Transferase</keyword>
<name>THIK_ECO81</name>
<gene>
    <name evidence="1" type="primary">thiK</name>
    <name type="ordered locus">ECED1_1249</name>
</gene>
<sequence>MPFRSNNPLTRDELLSRFFPQFHPVTTFNSGLSGGSFLIEHQGQRFVVRQPHDPDAPQSAFLRQYRALSQLPACIAPKPHLYLRDWMVVDYLPGEVKTYLPDTNELAGLLYYLHQQPRFGWRITLLPLLELYWQQSDPARRTVGWLRMLKRLRKAREPRLLRLSPLHMDVHAGNLVHSAPGLKLIDWEYAGDGDIALELAAVWVENTDQHRQLVNDYATRAKIYPAQLWRQVRRWFPWLLMLKAGWFEYRWRQTGDQQFIRLADDTWRQLLIKQ</sequence>
<dbReference type="EC" id="2.7.1.89" evidence="1"/>
<dbReference type="EMBL" id="CU928162">
    <property type="protein sequence ID" value="CAR07450.1"/>
    <property type="molecule type" value="Genomic_DNA"/>
</dbReference>
<dbReference type="RefSeq" id="WP_001116599.1">
    <property type="nucleotide sequence ID" value="NC_011745.1"/>
</dbReference>
<dbReference type="SMR" id="B7MTN6"/>
<dbReference type="KEGG" id="ecq:ECED1_1249"/>
<dbReference type="HOGENOM" id="CLU_055115_2_1_6"/>
<dbReference type="UniPathway" id="UPA00060">
    <property type="reaction ID" value="UER00596"/>
</dbReference>
<dbReference type="Proteomes" id="UP000000748">
    <property type="component" value="Chromosome"/>
</dbReference>
<dbReference type="GO" id="GO:0005524">
    <property type="term" value="F:ATP binding"/>
    <property type="evidence" value="ECO:0007669"/>
    <property type="project" value="UniProtKB-KW"/>
</dbReference>
<dbReference type="GO" id="GO:0019165">
    <property type="term" value="F:thiamine kinase activity"/>
    <property type="evidence" value="ECO:0007669"/>
    <property type="project" value="UniProtKB-UniRule"/>
</dbReference>
<dbReference type="GO" id="GO:0009229">
    <property type="term" value="P:thiamine diphosphate biosynthetic process"/>
    <property type="evidence" value="ECO:0007669"/>
    <property type="project" value="UniProtKB-UniRule"/>
</dbReference>
<dbReference type="GO" id="GO:0006772">
    <property type="term" value="P:thiamine metabolic process"/>
    <property type="evidence" value="ECO:0007669"/>
    <property type="project" value="InterPro"/>
</dbReference>
<dbReference type="FunFam" id="3.90.1200.10:FF:000004">
    <property type="entry name" value="Thiamine kinase"/>
    <property type="match status" value="1"/>
</dbReference>
<dbReference type="Gene3D" id="3.90.1200.10">
    <property type="match status" value="1"/>
</dbReference>
<dbReference type="HAMAP" id="MF_01604">
    <property type="entry name" value="Thiamine_kinase"/>
    <property type="match status" value="1"/>
</dbReference>
<dbReference type="InterPro" id="IPR002575">
    <property type="entry name" value="Aminoglycoside_PTrfase"/>
</dbReference>
<dbReference type="InterPro" id="IPR011009">
    <property type="entry name" value="Kinase-like_dom_sf"/>
</dbReference>
<dbReference type="InterPro" id="IPR014093">
    <property type="entry name" value="Thiamine_kinase"/>
</dbReference>
<dbReference type="NCBIfam" id="NF007620">
    <property type="entry name" value="PRK10271.1"/>
    <property type="match status" value="1"/>
</dbReference>
<dbReference type="NCBIfam" id="TIGR02721">
    <property type="entry name" value="ycfN_thiK"/>
    <property type="match status" value="1"/>
</dbReference>
<dbReference type="Pfam" id="PF01636">
    <property type="entry name" value="APH"/>
    <property type="match status" value="1"/>
</dbReference>
<dbReference type="SUPFAM" id="SSF56112">
    <property type="entry name" value="Protein kinase-like (PK-like)"/>
    <property type="match status" value="1"/>
</dbReference>
<protein>
    <recommendedName>
        <fullName evidence="1">Thiamine kinase</fullName>
        <ecNumber evidence="1">2.7.1.89</ecNumber>
    </recommendedName>
</protein>
<evidence type="ECO:0000255" key="1">
    <source>
        <dbReference type="HAMAP-Rule" id="MF_01604"/>
    </source>
</evidence>
<accession>B7MTN6</accession>
<comment type="function">
    <text evidence="1">Catalyzes the ATP-dependent phosphorylation of thiamine to thiamine phosphate. Is involved in thiamine salvage.</text>
</comment>
<comment type="catalytic activity">
    <reaction evidence="1">
        <text>thiamine + ATP = thiamine phosphate + ADP + H(+)</text>
        <dbReference type="Rhea" id="RHEA:12012"/>
        <dbReference type="ChEBI" id="CHEBI:15378"/>
        <dbReference type="ChEBI" id="CHEBI:18385"/>
        <dbReference type="ChEBI" id="CHEBI:30616"/>
        <dbReference type="ChEBI" id="CHEBI:37575"/>
        <dbReference type="ChEBI" id="CHEBI:456216"/>
        <dbReference type="EC" id="2.7.1.89"/>
    </reaction>
    <physiologicalReaction direction="left-to-right" evidence="1">
        <dbReference type="Rhea" id="RHEA:12013"/>
    </physiologicalReaction>
</comment>
<comment type="pathway">
    <text evidence="1">Cofactor biosynthesis; thiamine diphosphate biosynthesis; thiamine phosphate from thiamine: step 1/1.</text>
</comment>
<comment type="similarity">
    <text evidence="1">Belongs to the thiamine kinase family.</text>
</comment>
<reference key="1">
    <citation type="journal article" date="2009" name="PLoS Genet.">
        <title>Organised genome dynamics in the Escherichia coli species results in highly diverse adaptive paths.</title>
        <authorList>
            <person name="Touchon M."/>
            <person name="Hoede C."/>
            <person name="Tenaillon O."/>
            <person name="Barbe V."/>
            <person name="Baeriswyl S."/>
            <person name="Bidet P."/>
            <person name="Bingen E."/>
            <person name="Bonacorsi S."/>
            <person name="Bouchier C."/>
            <person name="Bouvet O."/>
            <person name="Calteau A."/>
            <person name="Chiapello H."/>
            <person name="Clermont O."/>
            <person name="Cruveiller S."/>
            <person name="Danchin A."/>
            <person name="Diard M."/>
            <person name="Dossat C."/>
            <person name="Karoui M.E."/>
            <person name="Frapy E."/>
            <person name="Garry L."/>
            <person name="Ghigo J.M."/>
            <person name="Gilles A.M."/>
            <person name="Johnson J."/>
            <person name="Le Bouguenec C."/>
            <person name="Lescat M."/>
            <person name="Mangenot S."/>
            <person name="Martinez-Jehanne V."/>
            <person name="Matic I."/>
            <person name="Nassif X."/>
            <person name="Oztas S."/>
            <person name="Petit M.A."/>
            <person name="Pichon C."/>
            <person name="Rouy Z."/>
            <person name="Ruf C.S."/>
            <person name="Schneider D."/>
            <person name="Tourret J."/>
            <person name="Vacherie B."/>
            <person name="Vallenet D."/>
            <person name="Medigue C."/>
            <person name="Rocha E.P.C."/>
            <person name="Denamur E."/>
        </authorList>
    </citation>
    <scope>NUCLEOTIDE SEQUENCE [LARGE SCALE GENOMIC DNA]</scope>
    <source>
        <strain>ED1a</strain>
    </source>
</reference>
<organism>
    <name type="scientific">Escherichia coli O81 (strain ED1a)</name>
    <dbReference type="NCBI Taxonomy" id="585397"/>
    <lineage>
        <taxon>Bacteria</taxon>
        <taxon>Pseudomonadati</taxon>
        <taxon>Pseudomonadota</taxon>
        <taxon>Gammaproteobacteria</taxon>
        <taxon>Enterobacterales</taxon>
        <taxon>Enterobacteriaceae</taxon>
        <taxon>Escherichia</taxon>
    </lineage>
</organism>
<feature type="chain" id="PRO_1000198093" description="Thiamine kinase">
    <location>
        <begin position="1"/>
        <end position="274"/>
    </location>
</feature>
<proteinExistence type="inferred from homology"/>